<keyword id="KW-0002">3D-structure</keyword>
<keyword id="KW-0007">Acetylation</keyword>
<keyword id="KW-0106">Calcium</keyword>
<keyword id="KW-0460">Magnesium</keyword>
<keyword id="KW-0479">Metal-binding</keyword>
<keyword id="KW-1185">Reference proteome</keyword>
<keyword id="KW-0786">Thiamine pyrophosphate</keyword>
<keyword id="KW-0808">Transferase</keyword>
<proteinExistence type="evidence at protein level"/>
<evidence type="ECO:0000269" key="1">
    <source>
    </source>
</evidence>
<evidence type="ECO:0000269" key="2">
    <source>
    </source>
</evidence>
<evidence type="ECO:0000269" key="3">
    <source>
    </source>
</evidence>
<evidence type="ECO:0000269" key="4">
    <source ref="9"/>
</evidence>
<evidence type="ECO:0000305" key="5"/>
<evidence type="ECO:0000305" key="6">
    <source>
    </source>
</evidence>
<evidence type="ECO:0000305" key="7">
    <source ref="9"/>
</evidence>
<evidence type="ECO:0007744" key="8">
    <source>
        <dbReference type="PDB" id="1QGD"/>
    </source>
</evidence>
<evidence type="ECO:0007744" key="9">
    <source>
        <dbReference type="PDB" id="2R5N"/>
    </source>
</evidence>
<evidence type="ECO:0007829" key="10">
    <source>
        <dbReference type="PDB" id="6TJ8"/>
    </source>
</evidence>
<evidence type="ECO:0007829" key="11">
    <source>
        <dbReference type="PDB" id="6TJ9"/>
    </source>
</evidence>
<reference key="1">
    <citation type="journal article" date="1993" name="Biochim. Biophys. Acta">
        <title>Nucleotide sequence of the Escherichia coli K-12 transketolase (tkt) gene.</title>
        <authorList>
            <person name="Sprenger G.A."/>
        </authorList>
    </citation>
    <scope>NUCLEOTIDE SEQUENCE [GENOMIC DNA]</scope>
    <source>
        <strain>K12</strain>
    </source>
</reference>
<reference key="2">
    <citation type="submission" date="1993-06" db="EMBL/GenBank/DDBJ databases">
        <authorList>
            <person name="Sprenger G.A."/>
        </authorList>
    </citation>
    <scope>SEQUENCE REVISION TO 632-633</scope>
</reference>
<reference key="3">
    <citation type="journal article" date="1997" name="Science">
        <title>The complete genome sequence of Escherichia coli K-12.</title>
        <authorList>
            <person name="Blattner F.R."/>
            <person name="Plunkett G. III"/>
            <person name="Bloch C.A."/>
            <person name="Perna N.T."/>
            <person name="Burland V."/>
            <person name="Riley M."/>
            <person name="Collado-Vides J."/>
            <person name="Glasner J.D."/>
            <person name="Rode C.K."/>
            <person name="Mayhew G.F."/>
            <person name="Gregor J."/>
            <person name="Davis N.W."/>
            <person name="Kirkpatrick H.A."/>
            <person name="Goeden M.A."/>
            <person name="Rose D.J."/>
            <person name="Mau B."/>
            <person name="Shao Y."/>
        </authorList>
    </citation>
    <scope>NUCLEOTIDE SEQUENCE [LARGE SCALE GENOMIC DNA]</scope>
    <source>
        <strain>K12 / MG1655 / ATCC 47076</strain>
    </source>
</reference>
<reference key="4">
    <citation type="journal article" date="2006" name="Nucleic Acids Res.">
        <title>Escherichia coli K-12: a cooperatively developed annotation snapshot -- 2005.</title>
        <authorList>
            <person name="Riley M."/>
            <person name="Abe T."/>
            <person name="Arnaud M.B."/>
            <person name="Berlyn M.K.B."/>
            <person name="Blattner F.R."/>
            <person name="Chaudhuri R.R."/>
            <person name="Glasner J.D."/>
            <person name="Horiuchi T."/>
            <person name="Keseler I.M."/>
            <person name="Kosuge T."/>
            <person name="Mori H."/>
            <person name="Perna N.T."/>
            <person name="Plunkett G. III"/>
            <person name="Rudd K.E."/>
            <person name="Serres M.H."/>
            <person name="Thomas G.H."/>
            <person name="Thomson N.R."/>
            <person name="Wishart D."/>
            <person name="Wanner B.L."/>
        </authorList>
    </citation>
    <scope>SEQUENCE REVISION TO 584</scope>
</reference>
<reference key="5">
    <citation type="journal article" date="2006" name="Mol. Syst. Biol.">
        <title>Highly accurate genome sequences of Escherichia coli K-12 strains MG1655 and W3110.</title>
        <authorList>
            <person name="Hayashi K."/>
            <person name="Morooka N."/>
            <person name="Yamamoto Y."/>
            <person name="Fujita K."/>
            <person name="Isono K."/>
            <person name="Choi S."/>
            <person name="Ohtsubo E."/>
            <person name="Baba T."/>
            <person name="Wanner B.L."/>
            <person name="Mori H."/>
            <person name="Horiuchi T."/>
        </authorList>
    </citation>
    <scope>NUCLEOTIDE SEQUENCE [LARGE SCALE GENOMIC DNA]</scope>
    <source>
        <strain>K12 / W3110 / ATCC 27325 / DSM 5911</strain>
    </source>
</reference>
<reference key="6">
    <citation type="journal article" date="1990" name="J. Bacteriol.">
        <title>Analysis and sequence of the speB gene encoding agmatine ureohydrolase, a putrescine biosynthetic enzyme in Escherichia coli.</title>
        <authorList>
            <person name="Szumanski M.B.W."/>
            <person name="Boyle S.M."/>
        </authorList>
    </citation>
    <scope>NUCLEOTIDE SEQUENCE [GENOMIC DNA] OF 1-27</scope>
</reference>
<reference key="7">
    <citation type="journal article" date="2009" name="Mol. Cell. Proteomics">
        <title>Lysine acetylation is a highly abundant and evolutionarily conserved modification in Escherichia coli.</title>
        <authorList>
            <person name="Zhang J."/>
            <person name="Sprung R."/>
            <person name="Pei J."/>
            <person name="Tan X."/>
            <person name="Kim S."/>
            <person name="Zhu H."/>
            <person name="Liu C.F."/>
            <person name="Grishin N.V."/>
            <person name="Zhao Y."/>
        </authorList>
    </citation>
    <scope>ACETYLATION [LARGE SCALE ANALYSIS] AT LYS-46</scope>
    <scope>IDENTIFICATION BY MASS SPECTROMETRY</scope>
    <source>
        <strain>K12 / JW1106</strain>
        <strain>K12 / MG1655 / ATCC 47076</strain>
    </source>
</reference>
<reference key="8">
    <citation type="journal article" date="1995" name="Eur. J. Biochem.">
        <title>Transketolase A of Escherichia coli K12. Purification and properties of the enzyme from recombinant strains.</title>
        <authorList>
            <person name="Sprenger G.A."/>
            <person name="Schorken U."/>
            <person name="Sprenger G."/>
            <person name="Sahm H."/>
        </authorList>
    </citation>
    <scope>FUNCTION</scope>
    <scope>CATALYTIC ACTIVITY</scope>
    <scope>SUBUNIT</scope>
    <scope>COFACTOR</scope>
</reference>
<reference key="9">
    <citation type="submission" date="1999-04" db="PDB data bank">
        <title>Crystal structure of Escherichia coli transketolase.</title>
        <authorList>
            <person name="Isupov M.N."/>
            <person name="Rupprecht M.P."/>
            <person name="Wilson K.S."/>
            <person name="Dauter Z."/>
            <person name="Littlechild J.A."/>
        </authorList>
    </citation>
    <scope>X-RAY CRYSTALLOGRAPHY (1.90 ANGSTROMS) OF 2-663 IN COMPLEX WITH CALCIUM AND THIAMINE PYROPHOSPHATE</scope>
</reference>
<reference key="10">
    <citation type="journal article" date="2007" name="Biochemistry">
        <title>Strain and near attack conformers in enzymic thiamin catalysis: X-ray crystallographic snapshots of bacterial transketolase in covalent complex with donor ketoses xylulose 5-phosphate and fructose 6-phosphate, and in noncovalent complex with acceptor aldose ribose 5-phosphate.</title>
        <authorList>
            <person name="Asztalos P."/>
            <person name="Parthier C."/>
            <person name="Golbik R."/>
            <person name="Kleinschmidt M."/>
            <person name="Hubner G."/>
            <person name="Weiss M.S."/>
            <person name="Friedemann R."/>
            <person name="Wille G."/>
            <person name="Tittmann K."/>
        </authorList>
    </citation>
    <scope>X-RAY CRYSTALLOGRAPHY (1.47 ANGSTROMS) IN COMPLEXES WITH SUBSTRATES; CALCIUM AND THIAMINE PYROPHOSPHATE</scope>
    <scope>CATALYTIC ACTIVITY</scope>
    <scope>FUNCTION</scope>
    <scope>COFACTOR</scope>
    <scope>SUBUNIT</scope>
    <scope>IDENTIFICATION BY MASS SPECTROMETRY</scope>
</reference>
<gene>
    <name type="primary">tktA</name>
    <name type="synonym">tkt</name>
    <name type="ordered locus">b2935</name>
    <name type="ordered locus">JW5478</name>
</gene>
<feature type="chain" id="PRO_0000191856" description="Transketolase 1">
    <location>
        <begin position="1"/>
        <end position="663"/>
    </location>
</feature>
<feature type="active site" description="Proton donor" evidence="5">
    <location>
        <position position="411"/>
    </location>
</feature>
<feature type="binding site" evidence="1">
    <location>
        <position position="26"/>
    </location>
    <ligand>
        <name>substrate</name>
    </ligand>
</feature>
<feature type="binding site" evidence="1 4 8 9">
    <location>
        <position position="66"/>
    </location>
    <ligand>
        <name>thiamine diphosphate</name>
        <dbReference type="ChEBI" id="CHEBI:58937"/>
    </ligand>
</feature>
<feature type="binding site" evidence="1 4 8 9">
    <location>
        <begin position="114"/>
        <end position="116"/>
    </location>
    <ligand>
        <name>thiamine diphosphate</name>
        <dbReference type="ChEBI" id="CHEBI:58937"/>
    </ligand>
</feature>
<feature type="binding site" evidence="6 7">
    <location>
        <position position="155"/>
    </location>
    <ligand>
        <name>Mg(2+)</name>
        <dbReference type="ChEBI" id="CHEBI:18420"/>
    </ligand>
</feature>
<feature type="binding site" evidence="4 8">
    <location>
        <position position="156"/>
    </location>
    <ligand>
        <name>thiamine diphosphate</name>
        <dbReference type="ChEBI" id="CHEBI:58937"/>
    </ligand>
</feature>
<feature type="binding site" evidence="6 7">
    <location>
        <position position="185"/>
    </location>
    <ligand>
        <name>Mg(2+)</name>
        <dbReference type="ChEBI" id="CHEBI:18420"/>
    </ligand>
</feature>
<feature type="binding site" evidence="1 4 8 9">
    <location>
        <position position="185"/>
    </location>
    <ligand>
        <name>thiamine diphosphate</name>
        <dbReference type="ChEBI" id="CHEBI:58937"/>
    </ligand>
</feature>
<feature type="binding site" evidence="6 7">
    <location>
        <position position="187"/>
    </location>
    <ligand>
        <name>Mg(2+)</name>
        <dbReference type="ChEBI" id="CHEBI:18420"/>
    </ligand>
</feature>
<feature type="binding site" evidence="1">
    <location>
        <position position="261"/>
    </location>
    <ligand>
        <name>substrate</name>
    </ligand>
</feature>
<feature type="binding site" evidence="1 4 8 9">
    <location>
        <position position="261"/>
    </location>
    <ligand>
        <name>thiamine diphosphate</name>
        <dbReference type="ChEBI" id="CHEBI:58937"/>
    </ligand>
</feature>
<feature type="binding site" evidence="1">
    <location>
        <position position="358"/>
    </location>
    <ligand>
        <name>substrate</name>
    </ligand>
</feature>
<feature type="binding site" evidence="1">
    <location>
        <position position="385"/>
    </location>
    <ligand>
        <name>substrate</name>
    </ligand>
</feature>
<feature type="binding site" evidence="1 4">
    <location>
        <position position="437"/>
    </location>
    <ligand>
        <name>thiamine diphosphate</name>
        <dbReference type="ChEBI" id="CHEBI:58937"/>
    </ligand>
</feature>
<feature type="binding site" evidence="1">
    <location>
        <position position="461"/>
    </location>
    <ligand>
        <name>substrate</name>
    </ligand>
</feature>
<feature type="binding site" evidence="1">
    <location>
        <position position="469"/>
    </location>
    <ligand>
        <name>substrate</name>
    </ligand>
</feature>
<feature type="binding site" evidence="1">
    <location>
        <position position="473"/>
    </location>
    <ligand>
        <name>substrate</name>
    </ligand>
</feature>
<feature type="binding site" evidence="1">
    <location>
        <position position="520"/>
    </location>
    <ligand>
        <name>substrate</name>
    </ligand>
</feature>
<feature type="site" description="Important for catalytic activity">
    <location>
        <position position="26"/>
    </location>
</feature>
<feature type="site" description="Important for catalytic activity">
    <location>
        <position position="261"/>
    </location>
</feature>
<feature type="modified residue" description="N6-acetyllysine" evidence="2">
    <location>
        <position position="46"/>
    </location>
</feature>
<feature type="sequence conflict" description="In Ref. 1; CAA48166." evidence="5" ref="1">
    <original>VGYTA</original>
    <variation>SGVTPL</variation>
    <location>
        <begin position="103"/>
        <end position="107"/>
    </location>
</feature>
<feature type="sequence conflict" description="In Ref. 1; CAA48166 and 3; AAA69102." evidence="5" ref="1 3">
    <original>P</original>
    <variation>S</variation>
    <location>
        <position position="584"/>
    </location>
</feature>
<feature type="helix" evidence="10">
    <location>
        <begin position="4"/>
        <end position="22"/>
    </location>
</feature>
<feature type="helix" evidence="10">
    <location>
        <begin position="28"/>
        <end position="43"/>
    </location>
</feature>
<feature type="strand" evidence="10">
    <location>
        <begin position="59"/>
        <end position="64"/>
    </location>
</feature>
<feature type="helix" evidence="10">
    <location>
        <begin position="65"/>
        <end position="67"/>
    </location>
</feature>
<feature type="helix" evidence="10">
    <location>
        <begin position="68"/>
        <end position="78"/>
    </location>
</feature>
<feature type="helix" evidence="10">
    <location>
        <begin position="84"/>
        <end position="87"/>
    </location>
</feature>
<feature type="turn" evidence="10">
    <location>
        <begin position="88"/>
        <end position="91"/>
    </location>
</feature>
<feature type="turn" evidence="10">
    <location>
        <begin position="103"/>
        <end position="105"/>
    </location>
</feature>
<feature type="helix" evidence="10">
    <location>
        <begin position="118"/>
        <end position="137"/>
    </location>
</feature>
<feature type="strand" evidence="10">
    <location>
        <begin position="149"/>
        <end position="153"/>
    </location>
</feature>
<feature type="helix" evidence="10">
    <location>
        <begin position="155"/>
        <end position="159"/>
    </location>
</feature>
<feature type="helix" evidence="10">
    <location>
        <begin position="161"/>
        <end position="172"/>
    </location>
</feature>
<feature type="strand" evidence="10">
    <location>
        <begin position="178"/>
        <end position="184"/>
    </location>
</feature>
<feature type="strand" evidence="10">
    <location>
        <begin position="186"/>
        <end position="188"/>
    </location>
</feature>
<feature type="helix" evidence="10">
    <location>
        <begin position="193"/>
        <end position="195"/>
    </location>
</feature>
<feature type="helix" evidence="10">
    <location>
        <begin position="201"/>
        <end position="207"/>
    </location>
</feature>
<feature type="strand" evidence="10">
    <location>
        <begin position="211"/>
        <end position="217"/>
    </location>
</feature>
<feature type="helix" evidence="10">
    <location>
        <begin position="221"/>
        <end position="233"/>
    </location>
</feature>
<feature type="strand" evidence="10">
    <location>
        <begin position="239"/>
        <end position="244"/>
    </location>
</feature>
<feature type="turn" evidence="10">
    <location>
        <begin position="247"/>
        <end position="250"/>
    </location>
</feature>
<feature type="turn" evidence="10">
    <location>
        <begin position="252"/>
        <end position="256"/>
    </location>
</feature>
<feature type="helix" evidence="10">
    <location>
        <begin position="258"/>
        <end position="260"/>
    </location>
</feature>
<feature type="strand" evidence="11">
    <location>
        <begin position="261"/>
        <end position="263"/>
    </location>
</feature>
<feature type="helix" evidence="10">
    <location>
        <begin position="267"/>
        <end position="277"/>
    </location>
</feature>
<feature type="helix" evidence="10">
    <location>
        <begin position="288"/>
        <end position="294"/>
    </location>
</feature>
<feature type="helix" evidence="10">
    <location>
        <begin position="297"/>
        <end position="317"/>
    </location>
</feature>
<feature type="helix" evidence="10">
    <location>
        <begin position="319"/>
        <end position="330"/>
    </location>
</feature>
<feature type="helix" evidence="10">
    <location>
        <begin position="337"/>
        <end position="350"/>
    </location>
</feature>
<feature type="helix" evidence="10">
    <location>
        <begin position="357"/>
        <end position="368"/>
    </location>
</feature>
<feature type="turn" evidence="10">
    <location>
        <begin position="369"/>
        <end position="371"/>
    </location>
</feature>
<feature type="strand" evidence="10">
    <location>
        <begin position="375"/>
        <end position="381"/>
    </location>
</feature>
<feature type="helix" evidence="10">
    <location>
        <begin position="383"/>
        <end position="386"/>
    </location>
</feature>
<feature type="turn" evidence="10">
    <location>
        <begin position="396"/>
        <end position="398"/>
    </location>
</feature>
<feature type="strand" evidence="10">
    <location>
        <begin position="403"/>
        <end position="406"/>
    </location>
</feature>
<feature type="helix" evidence="10">
    <location>
        <begin position="411"/>
        <end position="424"/>
    </location>
</feature>
<feature type="strand" evidence="10">
    <location>
        <begin position="428"/>
        <end position="434"/>
    </location>
</feature>
<feature type="helix" evidence="10">
    <location>
        <begin position="435"/>
        <end position="439"/>
    </location>
</feature>
<feature type="helix" evidence="10">
    <location>
        <begin position="442"/>
        <end position="450"/>
    </location>
</feature>
<feature type="strand" evidence="10">
    <location>
        <begin position="456"/>
        <end position="460"/>
    </location>
</feature>
<feature type="helix" evidence="10">
    <location>
        <begin position="464"/>
        <end position="466"/>
    </location>
</feature>
<feature type="turn" evidence="10">
    <location>
        <begin position="471"/>
        <end position="473"/>
    </location>
</feature>
<feature type="helix" evidence="10">
    <location>
        <begin position="478"/>
        <end position="483"/>
    </location>
</feature>
<feature type="strand" evidence="10">
    <location>
        <begin position="489"/>
        <end position="491"/>
    </location>
</feature>
<feature type="helix" evidence="10">
    <location>
        <begin position="496"/>
        <end position="508"/>
    </location>
</feature>
<feature type="strand" evidence="10">
    <location>
        <begin position="510"/>
        <end position="512"/>
    </location>
</feature>
<feature type="strand" evidence="10">
    <location>
        <begin position="514"/>
        <end position="518"/>
    </location>
</feature>
<feature type="strand" evidence="10">
    <location>
        <begin position="520"/>
        <end position="523"/>
    </location>
</feature>
<feature type="helix" evidence="10">
    <location>
        <begin position="530"/>
        <end position="535"/>
    </location>
</feature>
<feature type="helix" evidence="10">
    <location>
        <begin position="536"/>
        <end position="538"/>
    </location>
</feature>
<feature type="strand" evidence="10">
    <location>
        <begin position="541"/>
        <end position="544"/>
    </location>
</feature>
<feature type="strand" evidence="10">
    <location>
        <begin position="547"/>
        <end position="549"/>
    </location>
</feature>
<feature type="strand" evidence="10">
    <location>
        <begin position="551"/>
        <end position="556"/>
    </location>
</feature>
<feature type="helix" evidence="10">
    <location>
        <begin position="558"/>
        <end position="560"/>
    </location>
</feature>
<feature type="helix" evidence="10">
    <location>
        <begin position="561"/>
        <end position="574"/>
    </location>
</feature>
<feature type="strand" evidence="10">
    <location>
        <begin position="578"/>
        <end position="582"/>
    </location>
</feature>
<feature type="helix" evidence="10">
    <location>
        <begin position="586"/>
        <end position="590"/>
    </location>
</feature>
<feature type="helix" evidence="10">
    <location>
        <begin position="594"/>
        <end position="600"/>
    </location>
</feature>
<feature type="strand" evidence="10">
    <location>
        <begin position="608"/>
        <end position="615"/>
    </location>
</feature>
<feature type="helix" evidence="10">
    <location>
        <begin position="616"/>
        <end position="619"/>
    </location>
</feature>
<feature type="helix" evidence="10">
    <location>
        <begin position="620"/>
        <end position="623"/>
    </location>
</feature>
<feature type="strand" evidence="10">
    <location>
        <begin position="626"/>
        <end position="632"/>
    </location>
</feature>
<feature type="helix" evidence="10">
    <location>
        <begin position="641"/>
        <end position="647"/>
    </location>
</feature>
<feature type="helix" evidence="10">
    <location>
        <begin position="652"/>
        <end position="663"/>
    </location>
</feature>
<dbReference type="EC" id="2.2.1.1" evidence="1 3"/>
<dbReference type="EMBL" id="X68025">
    <property type="protein sequence ID" value="CAA48166.1"/>
    <property type="molecule type" value="Genomic_DNA"/>
</dbReference>
<dbReference type="EMBL" id="U28377">
    <property type="protein sequence ID" value="AAA69102.1"/>
    <property type="molecule type" value="Genomic_DNA"/>
</dbReference>
<dbReference type="EMBL" id="U00096">
    <property type="protein sequence ID" value="AAT48155.1"/>
    <property type="molecule type" value="Genomic_DNA"/>
</dbReference>
<dbReference type="EMBL" id="AP009048">
    <property type="protein sequence ID" value="BAE76998.1"/>
    <property type="molecule type" value="Genomic_DNA"/>
</dbReference>
<dbReference type="EMBL" id="M32363">
    <property type="status" value="NOT_ANNOTATED_CDS"/>
    <property type="molecule type" value="Genomic_DNA"/>
</dbReference>
<dbReference type="PIR" id="F65078">
    <property type="entry name" value="XJECTK"/>
</dbReference>
<dbReference type="RefSeq" id="WP_000098614.1">
    <property type="nucleotide sequence ID" value="NZ_STEB01000001.1"/>
</dbReference>
<dbReference type="RefSeq" id="YP_026188.1">
    <property type="nucleotide sequence ID" value="NC_000913.3"/>
</dbReference>
<dbReference type="PDB" id="1QGD">
    <property type="method" value="X-ray"/>
    <property type="resolution" value="1.90 A"/>
    <property type="chains" value="A/B=2-663"/>
</dbReference>
<dbReference type="PDB" id="2R5N">
    <property type="method" value="X-ray"/>
    <property type="resolution" value="1.60 A"/>
    <property type="chains" value="A/B=1-663"/>
</dbReference>
<dbReference type="PDB" id="2R8O">
    <property type="method" value="X-ray"/>
    <property type="resolution" value="1.47 A"/>
    <property type="chains" value="A/B=1-663"/>
</dbReference>
<dbReference type="PDB" id="2R8P">
    <property type="method" value="X-ray"/>
    <property type="resolution" value="1.65 A"/>
    <property type="chains" value="A/B=1-663"/>
</dbReference>
<dbReference type="PDB" id="5HHT">
    <property type="method" value="X-ray"/>
    <property type="resolution" value="1.50 A"/>
    <property type="chains" value="A/B=1-663"/>
</dbReference>
<dbReference type="PDB" id="6RJC">
    <property type="method" value="X-ray"/>
    <property type="resolution" value="1.05 A"/>
    <property type="chains" value="A/B=1-663"/>
</dbReference>
<dbReference type="PDB" id="6TJ8">
    <property type="method" value="X-ray"/>
    <property type="resolution" value="0.92 A"/>
    <property type="chains" value="A/B=1-663"/>
</dbReference>
<dbReference type="PDB" id="6TJ9">
    <property type="method" value="X-ray"/>
    <property type="resolution" value="0.95 A"/>
    <property type="chains" value="A/B=1-663"/>
</dbReference>
<dbReference type="PDB" id="8WA7">
    <property type="method" value="X-ray"/>
    <property type="resolution" value="1.63 A"/>
    <property type="chains" value="A/B=1-663"/>
</dbReference>
<dbReference type="PDBsum" id="1QGD"/>
<dbReference type="PDBsum" id="2R5N"/>
<dbReference type="PDBsum" id="2R8O"/>
<dbReference type="PDBsum" id="2R8P"/>
<dbReference type="PDBsum" id="5HHT"/>
<dbReference type="PDBsum" id="6RJC"/>
<dbReference type="PDBsum" id="6TJ8"/>
<dbReference type="PDBsum" id="6TJ9"/>
<dbReference type="PDBsum" id="8WA7"/>
<dbReference type="SMR" id="P27302"/>
<dbReference type="BioGRID" id="4260954">
    <property type="interactions" value="11"/>
</dbReference>
<dbReference type="BioGRID" id="851741">
    <property type="interactions" value="1"/>
</dbReference>
<dbReference type="DIP" id="DIP-10998N"/>
<dbReference type="FunCoup" id="P27302">
    <property type="interactions" value="780"/>
</dbReference>
<dbReference type="IntAct" id="P27302">
    <property type="interactions" value="1"/>
</dbReference>
<dbReference type="STRING" id="511145.b2935"/>
<dbReference type="DrugBank" id="DB01987">
    <property type="generic name" value="Cocarboxylase"/>
</dbReference>
<dbReference type="MoonProt" id="P27302"/>
<dbReference type="iPTMnet" id="P27302"/>
<dbReference type="jPOST" id="P27302"/>
<dbReference type="PaxDb" id="511145-b2935"/>
<dbReference type="EnsemblBacteria" id="AAT48155">
    <property type="protein sequence ID" value="AAT48155"/>
    <property type="gene ID" value="b2935"/>
</dbReference>
<dbReference type="GeneID" id="75205229"/>
<dbReference type="GeneID" id="947420"/>
<dbReference type="KEGG" id="ecj:JW5478"/>
<dbReference type="KEGG" id="eco:b2935"/>
<dbReference type="KEGG" id="ecoc:C3026_16070"/>
<dbReference type="PATRIC" id="fig|1411691.4.peg.3798"/>
<dbReference type="EchoBASE" id="EB1397"/>
<dbReference type="eggNOG" id="COG0021">
    <property type="taxonomic scope" value="Bacteria"/>
</dbReference>
<dbReference type="HOGENOM" id="CLU_009227_0_0_6"/>
<dbReference type="InParanoid" id="P27302"/>
<dbReference type="OMA" id="ADYMRGS"/>
<dbReference type="OrthoDB" id="8732661at2"/>
<dbReference type="PhylomeDB" id="P27302"/>
<dbReference type="BioCyc" id="EcoCyc:TRANSKETOI-MONOMER"/>
<dbReference type="BioCyc" id="MetaCyc:TRANSKETOI-MONOMER"/>
<dbReference type="BRENDA" id="2.2.1.1">
    <property type="organism ID" value="2026"/>
</dbReference>
<dbReference type="SABIO-RK" id="P27302"/>
<dbReference type="EvolutionaryTrace" id="P27302"/>
<dbReference type="PRO" id="PR:P27302"/>
<dbReference type="Proteomes" id="UP000000625">
    <property type="component" value="Chromosome"/>
</dbReference>
<dbReference type="GO" id="GO:0005829">
    <property type="term" value="C:cytosol"/>
    <property type="evidence" value="ECO:0000314"/>
    <property type="project" value="EcoCyc"/>
</dbReference>
<dbReference type="GO" id="GO:0000287">
    <property type="term" value="F:magnesium ion binding"/>
    <property type="evidence" value="ECO:0000314"/>
    <property type="project" value="EcoCyc"/>
</dbReference>
<dbReference type="GO" id="GO:0030145">
    <property type="term" value="F:manganese ion binding"/>
    <property type="evidence" value="ECO:0000314"/>
    <property type="project" value="EcoCyc"/>
</dbReference>
<dbReference type="GO" id="GO:0042803">
    <property type="term" value="F:protein homodimerization activity"/>
    <property type="evidence" value="ECO:0000314"/>
    <property type="project" value="EcoCyc"/>
</dbReference>
<dbReference type="GO" id="GO:0030976">
    <property type="term" value="F:thiamine pyrophosphate binding"/>
    <property type="evidence" value="ECO:0000314"/>
    <property type="project" value="EcoCyc"/>
</dbReference>
<dbReference type="GO" id="GO:0004802">
    <property type="term" value="F:transketolase activity"/>
    <property type="evidence" value="ECO:0000314"/>
    <property type="project" value="EcoCyc"/>
</dbReference>
<dbReference type="GO" id="GO:0006098">
    <property type="term" value="P:pentose-phosphate shunt"/>
    <property type="evidence" value="ECO:0000318"/>
    <property type="project" value="GO_Central"/>
</dbReference>
<dbReference type="GO" id="GO:0009052">
    <property type="term" value="P:pentose-phosphate shunt, non-oxidative branch"/>
    <property type="evidence" value="ECO:0000315"/>
    <property type="project" value="EcoCyc"/>
</dbReference>
<dbReference type="CDD" id="cd07033">
    <property type="entry name" value="TPP_PYR_DXS_TK_like"/>
    <property type="match status" value="1"/>
</dbReference>
<dbReference type="CDD" id="cd02012">
    <property type="entry name" value="TPP_TK"/>
    <property type="match status" value="1"/>
</dbReference>
<dbReference type="FunFam" id="3.40.50.920:FF:000003">
    <property type="entry name" value="Transketolase"/>
    <property type="match status" value="1"/>
</dbReference>
<dbReference type="FunFam" id="3.40.50.970:FF:000003">
    <property type="entry name" value="Transketolase"/>
    <property type="match status" value="1"/>
</dbReference>
<dbReference type="FunFam" id="3.40.50.970:FF:000004">
    <property type="entry name" value="Transketolase"/>
    <property type="match status" value="1"/>
</dbReference>
<dbReference type="Gene3D" id="3.40.50.920">
    <property type="match status" value="1"/>
</dbReference>
<dbReference type="Gene3D" id="3.40.50.970">
    <property type="match status" value="2"/>
</dbReference>
<dbReference type="InterPro" id="IPR029061">
    <property type="entry name" value="THDP-binding"/>
</dbReference>
<dbReference type="InterPro" id="IPR009014">
    <property type="entry name" value="Transketo_C/PFOR_II"/>
</dbReference>
<dbReference type="InterPro" id="IPR055152">
    <property type="entry name" value="Transketolase-like_C_2"/>
</dbReference>
<dbReference type="InterPro" id="IPR005475">
    <property type="entry name" value="Transketolase-like_Pyr-bd"/>
</dbReference>
<dbReference type="InterPro" id="IPR005478">
    <property type="entry name" value="Transketolase_bac-like"/>
</dbReference>
<dbReference type="InterPro" id="IPR020826">
    <property type="entry name" value="Transketolase_BS"/>
</dbReference>
<dbReference type="InterPro" id="IPR049557">
    <property type="entry name" value="Transketolase_CS"/>
</dbReference>
<dbReference type="InterPro" id="IPR033247">
    <property type="entry name" value="Transketolase_fam"/>
</dbReference>
<dbReference type="InterPro" id="IPR005474">
    <property type="entry name" value="Transketolase_N"/>
</dbReference>
<dbReference type="NCBIfam" id="TIGR00232">
    <property type="entry name" value="tktlase_bact"/>
    <property type="match status" value="1"/>
</dbReference>
<dbReference type="PANTHER" id="PTHR43522">
    <property type="entry name" value="TRANSKETOLASE"/>
    <property type="match status" value="1"/>
</dbReference>
<dbReference type="PANTHER" id="PTHR43522:SF2">
    <property type="entry name" value="TRANSKETOLASE 1-RELATED"/>
    <property type="match status" value="1"/>
</dbReference>
<dbReference type="Pfam" id="PF02779">
    <property type="entry name" value="Transket_pyr"/>
    <property type="match status" value="1"/>
</dbReference>
<dbReference type="Pfam" id="PF22613">
    <property type="entry name" value="Transketolase_C_1"/>
    <property type="match status" value="1"/>
</dbReference>
<dbReference type="Pfam" id="PF00456">
    <property type="entry name" value="Transketolase_N"/>
    <property type="match status" value="1"/>
</dbReference>
<dbReference type="SMART" id="SM00861">
    <property type="entry name" value="Transket_pyr"/>
    <property type="match status" value="1"/>
</dbReference>
<dbReference type="SUPFAM" id="SSF52518">
    <property type="entry name" value="Thiamin diphosphate-binding fold (THDP-binding)"/>
    <property type="match status" value="2"/>
</dbReference>
<dbReference type="SUPFAM" id="SSF52922">
    <property type="entry name" value="TK C-terminal domain-like"/>
    <property type="match status" value="1"/>
</dbReference>
<dbReference type="PROSITE" id="PS00801">
    <property type="entry name" value="TRANSKETOLASE_1"/>
    <property type="match status" value="1"/>
</dbReference>
<dbReference type="PROSITE" id="PS00802">
    <property type="entry name" value="TRANSKETOLASE_2"/>
    <property type="match status" value="1"/>
</dbReference>
<sequence length="663" mass="72212">MSSRKELANAIRALSMDAVQKAKSGHPGAPMGMADIAEVLWRDFLKHNPQNPSWADRDRFVLSNGHGSMLIYSLLHLTGYDLPMEELKNFRQLHSKTPGHPEVGYTAGVETTTGPLGQGIANAVGMAIAEKTLAAQFNRPGHDIVDHYTYAFMGDGCMMEGISHEVCSLAGTLKLGKLIAFYDDNGISIDGHVEGWFTDDTAMRFEAYGWHVIRDIDGHDAASIKRAVEEARAVTDKPSLLMCKTIIGFGSPNKAGTHDSHGAPLGDAEIALTREQLGWKYAPFEIPSEIYAQWDAKEAGQAKESAWNEKFAAYAKAYPQEAAEFTRRMKGEMPSDFDAKAKEFIAKLQANPAKIASRKASQNAIEAFGPLLPEFLGGSADLAPSNLTLWSGSKAINEDAAGNYIHYGVREFGMTAIANGISLHGGFLPYTSTFLMFVEYARNAVRMAALMKQRQVMVYTHDSIGLGEDGPTHQPVEQVASLRVTPNMSTWRPCDQVESAVAWKYGVERQDGPTALILSRQNLAQQERTEEQLANIARGGYVLKDCAGQPELIFIATGSEVELAVAAYEKLTAEGVKARVVSMPSTDAFDKQDAAYRESVLPKAVTARVAVEAGIADYWYKYVGLNGAIVGMTTFGESAPAELLFEEFGFTVDNVVAKAKELL</sequence>
<name>TKT1_ECOLI</name>
<accession>P27302</accession>
<accession>Q2M9Q8</accession>
<accession>Q6BF59</accession>
<comment type="function">
    <text evidence="1 3">Catalyzes the transfer of a two-carbon ketol group from a ketose donor to an aldose acceptor, via a covalent intermediate with the cofactor thiamine pyrophosphate. Thus, catalyzes the reversible transfer of a two-carbon ketol group from sedoheptulose-7-phosphate to glyceraldehyde-3-phosphate, producing xylulose-5-phosphate and ribose-5-phosphate.</text>
</comment>
<comment type="catalytic activity">
    <reaction evidence="1 3">
        <text>D-sedoheptulose 7-phosphate + D-glyceraldehyde 3-phosphate = aldehydo-D-ribose 5-phosphate + D-xylulose 5-phosphate</text>
        <dbReference type="Rhea" id="RHEA:10508"/>
        <dbReference type="ChEBI" id="CHEBI:57483"/>
        <dbReference type="ChEBI" id="CHEBI:57737"/>
        <dbReference type="ChEBI" id="CHEBI:58273"/>
        <dbReference type="ChEBI" id="CHEBI:59776"/>
        <dbReference type="EC" id="2.2.1.1"/>
    </reaction>
</comment>
<comment type="cofactor">
    <cofactor evidence="3">
        <name>Mg(2+)</name>
        <dbReference type="ChEBI" id="CHEBI:18420"/>
    </cofactor>
    <cofactor evidence="3">
        <name>Ca(2+)</name>
        <dbReference type="ChEBI" id="CHEBI:29108"/>
    </cofactor>
    <cofactor evidence="3">
        <name>Mn(2+)</name>
        <dbReference type="ChEBI" id="CHEBI:29035"/>
    </cofactor>
    <cofactor evidence="3">
        <name>Co(2+)</name>
        <dbReference type="ChEBI" id="CHEBI:48828"/>
    </cofactor>
    <text evidence="3">Binds 1 Mg(2+) ion per subunit. Can also utilize other divalent metal cations, such as Ca(2+), Mn(2+) and Co(2+).</text>
</comment>
<comment type="cofactor">
    <cofactor evidence="3">
        <name>thiamine diphosphate</name>
        <dbReference type="ChEBI" id="CHEBI:58937"/>
    </cofactor>
    <text evidence="1">Binds 1 thiamine pyrophosphate per subunit. During the reaction, the substrate forms a covalent intermediate with the cofactor.</text>
</comment>
<comment type="subunit">
    <text evidence="1 3 4">Homodimer.</text>
</comment>
<comment type="similarity">
    <text evidence="5">Belongs to the transketolase family.</text>
</comment>
<organism>
    <name type="scientific">Escherichia coli (strain K12)</name>
    <dbReference type="NCBI Taxonomy" id="83333"/>
    <lineage>
        <taxon>Bacteria</taxon>
        <taxon>Pseudomonadati</taxon>
        <taxon>Pseudomonadota</taxon>
        <taxon>Gammaproteobacteria</taxon>
        <taxon>Enterobacterales</taxon>
        <taxon>Enterobacteriaceae</taxon>
        <taxon>Escherichia</taxon>
    </lineage>
</organism>
<protein>
    <recommendedName>
        <fullName>Transketolase 1</fullName>
        <shortName>TK 1</shortName>
        <ecNumber evidence="1 3">2.2.1.1</ecNumber>
    </recommendedName>
</protein>